<sequence length="121" mass="14272">MDSNTITSFQDILQRMSKMQLESSSADLNGMITQFERLKIYRDSLGESVMRMGDLHSLQNRNATWRDELSQKFEEIRWLIAECRNILTKTENSFEQITFLQALQLLLEVESEIRTFSFQLI</sequence>
<organism>
    <name type="scientific">Influenza A virus (strain A/Tern/Turkmenia/18/1972 H3N3)</name>
    <dbReference type="NCBI Taxonomy" id="384492"/>
    <lineage>
        <taxon>Viruses</taxon>
        <taxon>Riboviria</taxon>
        <taxon>Orthornavirae</taxon>
        <taxon>Negarnaviricota</taxon>
        <taxon>Polyploviricotina</taxon>
        <taxon>Insthoviricetes</taxon>
        <taxon>Articulavirales</taxon>
        <taxon>Orthomyxoviridae</taxon>
        <taxon>Alphainfluenzavirus</taxon>
        <taxon>Alphainfluenzavirus influenzae</taxon>
        <taxon>Influenza A virus</taxon>
    </lineage>
</organism>
<dbReference type="EMBL" id="M55466">
    <property type="protein sequence ID" value="ABG72673.1"/>
    <property type="molecule type" value="Genomic_RNA"/>
</dbReference>
<dbReference type="SMR" id="P69269"/>
<dbReference type="GO" id="GO:0042025">
    <property type="term" value="C:host cell nucleus"/>
    <property type="evidence" value="ECO:0007669"/>
    <property type="project" value="UniProtKB-SubCell"/>
</dbReference>
<dbReference type="GO" id="GO:0044423">
    <property type="term" value="C:virion component"/>
    <property type="evidence" value="ECO:0007669"/>
    <property type="project" value="UniProtKB-UniRule"/>
</dbReference>
<dbReference type="GO" id="GO:0039675">
    <property type="term" value="P:exit of virus from host cell nucleus through nuclear pore"/>
    <property type="evidence" value="ECO:0007669"/>
    <property type="project" value="UniProtKB-UniRule"/>
</dbReference>
<dbReference type="Gene3D" id="1.10.287.230">
    <property type="match status" value="1"/>
</dbReference>
<dbReference type="HAMAP" id="MF_04067">
    <property type="entry name" value="INFV_NEP"/>
    <property type="match status" value="1"/>
</dbReference>
<dbReference type="InterPro" id="IPR000968">
    <property type="entry name" value="Flu_NS2"/>
</dbReference>
<dbReference type="Pfam" id="PF00601">
    <property type="entry name" value="Flu_NS2"/>
    <property type="match status" value="1"/>
</dbReference>
<dbReference type="SUPFAM" id="SSF101156">
    <property type="entry name" value="Nonstructural protein ns2, Nep, M1-binding domain"/>
    <property type="match status" value="1"/>
</dbReference>
<feature type="chain" id="PRO_0000079010" description="Nuclear export protein">
    <location>
        <begin position="1"/>
        <end position="121"/>
    </location>
</feature>
<feature type="short sequence motif" description="Nuclear export signal" evidence="1">
    <location>
        <begin position="12"/>
        <end position="21"/>
    </location>
</feature>
<feature type="short sequence motif" description="Nuclear export signal" evidence="1">
    <location>
        <begin position="85"/>
        <end position="94"/>
    </location>
</feature>
<name>NEP_I72A6</name>
<evidence type="ECO:0000255" key="1">
    <source>
        <dbReference type="HAMAP-Rule" id="MF_04067"/>
    </source>
</evidence>
<reference key="1">
    <citation type="journal article" date="1991" name="Virology">
        <title>Phylogenetic relationship of the nonstructural (NS) genes of influenza A viruses.</title>
        <authorList>
            <person name="Ludwig S."/>
            <person name="Schultz U."/>
            <person name="Mandler J."/>
            <person name="Fitch W.M."/>
            <person name="Scholtissek C."/>
        </authorList>
    </citation>
    <scope>NUCLEOTIDE SEQUENCE [GENOMIC RNA]</scope>
</reference>
<gene>
    <name evidence="1" type="primary">NS</name>
</gene>
<proteinExistence type="inferred from homology"/>
<protein>
    <recommendedName>
        <fullName evidence="1">Nuclear export protein</fullName>
        <shortName evidence="1">NEP</shortName>
    </recommendedName>
    <alternativeName>
        <fullName evidence="1">Non-structural protein 2</fullName>
        <shortName evidence="1">NS2</shortName>
    </alternativeName>
</protein>
<keyword id="KW-0025">Alternative splicing</keyword>
<keyword id="KW-1048">Host nucleus</keyword>
<keyword id="KW-0945">Host-virus interaction</keyword>
<keyword id="KW-0813">Transport</keyword>
<keyword id="KW-0946">Virion</keyword>
<accession>P69269</accession>
<accession>P13149</accession>
<accession>Q0PDL8</accession>
<organismHost>
    <name type="scientific">Aves</name>
    <dbReference type="NCBI Taxonomy" id="8782"/>
</organismHost>
<comment type="function">
    <text evidence="1">Mediates the nuclear export of encapsidated genomic RNAs (ribonucleoproteins, RNPs). Acts as an adapter between viral RNPs complexes and the nuclear export machinery of the cell. Possesses no intrinsic RNA-binding activity, but includes a C-terminal M1-binding domain. This domain is believed to allow recognition of RNPs bound to the protein M1. Since protein M1 is not available in large quantities before late stages of infection, such an indirect recognition mechanism probably ensures that genomic RNPs are not exported from the host nucleus until sufficient quantities of viral mRNA and progeny genomic RNA have been synthesized. Furthermore, the RNPs enter the host cytoplasm only when associated with the M1 protein that is necessary to guide them to the plasma membrane. May down-regulate viral RNA synthesis when overproduced.</text>
</comment>
<comment type="subunit">
    <text evidence="1">Interacts with protein M1. May interact with host nucleoporin RAB/HRB and exportin XPO1/CRM1.</text>
</comment>
<comment type="subcellular location">
    <subcellularLocation>
        <location evidence="1">Virion</location>
    </subcellularLocation>
    <subcellularLocation>
        <location evidence="1">Host nucleus</location>
    </subcellularLocation>
</comment>
<comment type="alternative products">
    <event type="alternative splicing"/>
    <isoform>
        <id>P69269-1</id>
        <name>NEP</name>
        <name>NS2</name>
        <sequence type="displayed"/>
    </isoform>
    <isoform>
        <id>P30912-1</id>
        <name>NS1</name>
        <sequence type="external"/>
    </isoform>
</comment>
<comment type="miscellaneous">
    <text>Average number present in a viral particle is estimated to be 130-200 molecules.</text>
</comment>
<comment type="similarity">
    <text evidence="1">Belongs to the influenza viruses NEP family.</text>
</comment>